<accession>Q5ZMS1</accession>
<keyword id="KW-0963">Cytoplasm</keyword>
<keyword id="KW-0217">Developmental protein</keyword>
<keyword id="KW-0221">Differentiation</keyword>
<keyword id="KW-0539">Nucleus</keyword>
<keyword id="KW-1185">Reference proteome</keyword>
<keyword id="KW-0804">Transcription</keyword>
<keyword id="KW-0805">Transcription regulation</keyword>
<organism>
    <name type="scientific">Gallus gallus</name>
    <name type="common">Chicken</name>
    <dbReference type="NCBI Taxonomy" id="9031"/>
    <lineage>
        <taxon>Eukaryota</taxon>
        <taxon>Metazoa</taxon>
        <taxon>Chordata</taxon>
        <taxon>Craniata</taxon>
        <taxon>Vertebrata</taxon>
        <taxon>Euteleostomi</taxon>
        <taxon>Archelosauria</taxon>
        <taxon>Archosauria</taxon>
        <taxon>Dinosauria</taxon>
        <taxon>Saurischia</taxon>
        <taxon>Theropoda</taxon>
        <taxon>Coelurosauria</taxon>
        <taxon>Aves</taxon>
        <taxon>Neognathae</taxon>
        <taxon>Galloanserae</taxon>
        <taxon>Galliformes</taxon>
        <taxon>Phasianidae</taxon>
        <taxon>Phasianinae</taxon>
        <taxon>Gallus</taxon>
    </lineage>
</organism>
<dbReference type="EMBL" id="AJ719313">
    <property type="protein sequence ID" value="CAG30972.1"/>
    <property type="molecule type" value="mRNA"/>
</dbReference>
<dbReference type="RefSeq" id="NP_001026094.1">
    <property type="nucleotide sequence ID" value="NM_001030923.2"/>
</dbReference>
<dbReference type="SMR" id="Q5ZMS1"/>
<dbReference type="FunCoup" id="Q5ZMS1">
    <property type="interactions" value="2244"/>
</dbReference>
<dbReference type="STRING" id="9031.ENSGALP00000042057"/>
<dbReference type="PaxDb" id="9031-ENSGALP00000042057"/>
<dbReference type="GeneID" id="419929"/>
<dbReference type="KEGG" id="gga:419929"/>
<dbReference type="CTD" id="129685"/>
<dbReference type="VEuPathDB" id="HostDB:geneid_419929"/>
<dbReference type="eggNOG" id="KOG4336">
    <property type="taxonomic scope" value="Eukaryota"/>
</dbReference>
<dbReference type="HOGENOM" id="CLU_070829_0_0_1"/>
<dbReference type="InParanoid" id="Q5ZMS1"/>
<dbReference type="OMA" id="SAHNYCE"/>
<dbReference type="OrthoDB" id="2193813at2759"/>
<dbReference type="PhylomeDB" id="Q5ZMS1"/>
<dbReference type="Reactome" id="R-GGA-6807505">
    <property type="pathway name" value="RNA polymerase II transcribes snRNA genes"/>
</dbReference>
<dbReference type="PRO" id="PR:Q5ZMS1"/>
<dbReference type="Proteomes" id="UP000000539">
    <property type="component" value="Chromosome 26"/>
</dbReference>
<dbReference type="Bgee" id="ENSGALG00000003498">
    <property type="expression patterns" value="Expressed in spleen and 13 other cell types or tissues"/>
</dbReference>
<dbReference type="GO" id="GO:0005737">
    <property type="term" value="C:cytoplasm"/>
    <property type="evidence" value="ECO:0007669"/>
    <property type="project" value="UniProtKB-SubCell"/>
</dbReference>
<dbReference type="GO" id="GO:0005669">
    <property type="term" value="C:transcription factor TFIID complex"/>
    <property type="evidence" value="ECO:0000250"/>
    <property type="project" value="UniProtKB"/>
</dbReference>
<dbReference type="GO" id="GO:0046982">
    <property type="term" value="F:protein heterodimerization activity"/>
    <property type="evidence" value="ECO:0007669"/>
    <property type="project" value="InterPro"/>
</dbReference>
<dbReference type="GO" id="GO:0030154">
    <property type="term" value="P:cell differentiation"/>
    <property type="evidence" value="ECO:0007669"/>
    <property type="project" value="UniProtKB-KW"/>
</dbReference>
<dbReference type="GO" id="GO:0006367">
    <property type="term" value="P:transcription initiation at RNA polymerase II promoter"/>
    <property type="evidence" value="ECO:0000318"/>
    <property type="project" value="GO_Central"/>
</dbReference>
<dbReference type="CDD" id="cd22918">
    <property type="entry name" value="HFD_TAF8"/>
    <property type="match status" value="1"/>
</dbReference>
<dbReference type="CDD" id="cd08049">
    <property type="entry name" value="TAF8"/>
    <property type="match status" value="1"/>
</dbReference>
<dbReference type="FunFam" id="1.10.20.10:FF:000116">
    <property type="entry name" value="Transcription initiation factor TFIID subunit 8"/>
    <property type="match status" value="1"/>
</dbReference>
<dbReference type="Gene3D" id="1.10.20.10">
    <property type="entry name" value="Histone, subunit A"/>
    <property type="match status" value="1"/>
</dbReference>
<dbReference type="InterPro" id="IPR006565">
    <property type="entry name" value="BTP"/>
</dbReference>
<dbReference type="InterPro" id="IPR009072">
    <property type="entry name" value="Histone-fold"/>
</dbReference>
<dbReference type="InterPro" id="IPR037818">
    <property type="entry name" value="TAF8"/>
</dbReference>
<dbReference type="InterPro" id="IPR019473">
    <property type="entry name" value="TFIID_su8_C"/>
</dbReference>
<dbReference type="PANTHER" id="PTHR46469">
    <property type="entry name" value="TRANSCRIPTION INITIATION FACTOR TFIID SUBUNIT 8"/>
    <property type="match status" value="1"/>
</dbReference>
<dbReference type="PANTHER" id="PTHR46469:SF1">
    <property type="entry name" value="TRANSCRIPTION INITIATION FACTOR TFIID SUBUNIT 8"/>
    <property type="match status" value="1"/>
</dbReference>
<dbReference type="Pfam" id="PF07524">
    <property type="entry name" value="Bromo_TP"/>
    <property type="match status" value="1"/>
</dbReference>
<dbReference type="Pfam" id="PF10406">
    <property type="entry name" value="TAF8_C"/>
    <property type="match status" value="1"/>
</dbReference>
<comment type="function">
    <text evidence="2">The TFIID basal transcription factor complex plays a major role in the initiation of RNA polymerase II (Pol II)-dependent transcription. TFIID recognizes and binds promoters with or without a TATA box via its subunit TBP, a TATA-box-binding protein, and promotes assembly of the pre-initiation complex (PIC). The TFIID complex consists of TBP and TBP-associated factors (TAFs). Mediates both basal and activator-dependent transcription.</text>
</comment>
<comment type="subunit">
    <text evidence="2">Component of the TFIID basal transcription factor complex, composed of TATA-box-binding protein TBP, and a number of TBP-associated factors (TAFs).</text>
</comment>
<comment type="subcellular location">
    <subcellularLocation>
        <location evidence="1">Nucleus</location>
    </subcellularLocation>
    <subcellularLocation>
        <location evidence="1">Cytoplasm</location>
    </subcellularLocation>
</comment>
<comment type="similarity">
    <text evidence="5">Belongs to the TAF8 family.</text>
</comment>
<sequence>MLQSYISEIGRSAKSYCEHTARTQPTLSDIVVTLVEMGFNVETLPAYAKRSQRMVITAPPVTNQPVTPKALTAGQNKPHPSHIPGYFPEFPDPHTYIKTPTYREPVSDYQVLREKAASQRRDVERALTRFMAKTGETQSLFKDDVSTFPLIAARPFTVPYLTALLPSELEMQQMEETDSSEQDDQTDTENLPLHISTDDSGPEKENASVLQQNTSLSGSRNGEENMIDNPYLRPVKKPKIRRKK</sequence>
<name>TAF8_CHICK</name>
<proteinExistence type="evidence at transcript level"/>
<feature type="chain" id="PRO_0000315399" description="Transcription initiation factor TFIID subunit 8">
    <location>
        <begin position="1"/>
        <end position="244"/>
    </location>
</feature>
<feature type="region of interest" description="Disordered" evidence="4">
    <location>
        <begin position="172"/>
        <end position="244"/>
    </location>
</feature>
<feature type="short sequence motif" description="Nuclear localization signal" evidence="3">
    <location>
        <begin position="231"/>
        <end position="244"/>
    </location>
</feature>
<feature type="compositionally biased region" description="Acidic residues" evidence="4">
    <location>
        <begin position="173"/>
        <end position="187"/>
    </location>
</feature>
<feature type="compositionally biased region" description="Polar residues" evidence="4">
    <location>
        <begin position="208"/>
        <end position="220"/>
    </location>
</feature>
<feature type="compositionally biased region" description="Basic residues" evidence="4">
    <location>
        <begin position="234"/>
        <end position="244"/>
    </location>
</feature>
<evidence type="ECO:0000250" key="1"/>
<evidence type="ECO:0000250" key="2">
    <source>
        <dbReference type="UniProtKB" id="Q7Z7C8"/>
    </source>
</evidence>
<evidence type="ECO:0000255" key="3"/>
<evidence type="ECO:0000256" key="4">
    <source>
        <dbReference type="SAM" id="MobiDB-lite"/>
    </source>
</evidence>
<evidence type="ECO:0000305" key="5"/>
<protein>
    <recommendedName>
        <fullName>Transcription initiation factor TFIID subunit 8</fullName>
    </recommendedName>
    <alternativeName>
        <fullName>TBP-associated factor 8</fullName>
    </alternativeName>
</protein>
<gene>
    <name type="primary">TAF8</name>
    <name type="ORF">RCJMB04_1f12</name>
</gene>
<reference key="1">
    <citation type="journal article" date="2005" name="Genome Biol.">
        <title>Full-length cDNAs from chicken bursal lymphocytes to facilitate gene function analysis.</title>
        <authorList>
            <person name="Caldwell R.B."/>
            <person name="Kierzek A.M."/>
            <person name="Arakawa H."/>
            <person name="Bezzubov Y."/>
            <person name="Zaim J."/>
            <person name="Fiedler P."/>
            <person name="Kutter S."/>
            <person name="Blagodatski A."/>
            <person name="Kostovska D."/>
            <person name="Koter M."/>
            <person name="Plachy J."/>
            <person name="Carninci P."/>
            <person name="Hayashizaki Y."/>
            <person name="Buerstedde J.-M."/>
        </authorList>
    </citation>
    <scope>NUCLEOTIDE SEQUENCE [LARGE SCALE MRNA]</scope>
    <source>
        <strain>CB</strain>
        <tissue>Bursa of Fabricius</tissue>
    </source>
</reference>